<feature type="chain" id="PRO_0000428268" description="dTDP-4-dehydrorhamnose 3,5-epimerase">
    <location>
        <begin position="1"/>
        <end position="202"/>
    </location>
</feature>
<feature type="active site" description="Proton acceptor" evidence="4">
    <location>
        <position position="62"/>
    </location>
</feature>
<feature type="active site" description="Proton donor" evidence="4">
    <location>
        <position position="132"/>
    </location>
</feature>
<feature type="binding site" evidence="4">
    <location>
        <position position="23"/>
    </location>
    <ligand>
        <name>substrate</name>
    </ligand>
</feature>
<feature type="binding site" evidence="4">
    <location>
        <position position="28"/>
    </location>
    <ligand>
        <name>substrate</name>
    </ligand>
</feature>
<feature type="binding site" evidence="4">
    <location>
        <begin position="47"/>
        <end position="49"/>
    </location>
    <ligand>
        <name>substrate</name>
    </ligand>
</feature>
<feature type="binding site" evidence="4">
    <location>
        <position position="59"/>
    </location>
    <ligand>
        <name>substrate</name>
    </ligand>
</feature>
<feature type="binding site" evidence="4">
    <location>
        <position position="72"/>
    </location>
    <ligand>
        <name>substrate</name>
    </ligand>
</feature>
<feature type="binding site" evidence="4">
    <location>
        <position position="119"/>
    </location>
    <ligand>
        <name>substrate</name>
    </ligand>
</feature>
<feature type="binding site" evidence="4">
    <location>
        <position position="143"/>
    </location>
    <ligand>
        <name>substrate</name>
    </ligand>
</feature>
<feature type="binding site" evidence="4">
    <location>
        <position position="170"/>
    </location>
    <ligand>
        <name>substrate</name>
    </ligand>
</feature>
<feature type="site" description="Participates in a stacking interaction with the thymidine ring of dTDP-4-oxo-6-deoxyglucose" evidence="3">
    <location>
        <position position="138"/>
    </location>
</feature>
<keyword id="KW-0119">Carbohydrate metabolism</keyword>
<keyword id="KW-0413">Isomerase</keyword>
<keyword id="KW-1185">Reference proteome</keyword>
<name>RMLC_MYCTO</name>
<organism>
    <name type="scientific">Mycobacterium tuberculosis (strain CDC 1551 / Oshkosh)</name>
    <dbReference type="NCBI Taxonomy" id="83331"/>
    <lineage>
        <taxon>Bacteria</taxon>
        <taxon>Bacillati</taxon>
        <taxon>Actinomycetota</taxon>
        <taxon>Actinomycetes</taxon>
        <taxon>Mycobacteriales</taxon>
        <taxon>Mycobacteriaceae</taxon>
        <taxon>Mycobacterium</taxon>
        <taxon>Mycobacterium tuberculosis complex</taxon>
    </lineage>
</organism>
<protein>
    <recommendedName>
        <fullName evidence="2">dTDP-4-dehydrorhamnose 3,5-epimerase</fullName>
        <ecNumber evidence="2">5.1.3.13</ecNumber>
    </recommendedName>
    <alternativeName>
        <fullName evidence="2">Thymidine diphospho-4-keto-rhamnose 3,5-epimerase</fullName>
    </alternativeName>
    <alternativeName>
        <fullName evidence="2">dTDP-4-keto-6-deoxyglucose 3,5-epimerase</fullName>
    </alternativeName>
    <alternativeName>
        <fullName evidence="2">dTDP-6-deoxy-D-xylo-4-hexulose 3,5-epimerase</fullName>
    </alternativeName>
    <alternativeName>
        <fullName evidence="2">dTDP-L-rhamnose synthase</fullName>
    </alternativeName>
</protein>
<reference key="1">
    <citation type="journal article" date="2002" name="J. Bacteriol.">
        <title>Whole-genome comparison of Mycobacterium tuberculosis clinical and laboratory strains.</title>
        <authorList>
            <person name="Fleischmann R.D."/>
            <person name="Alland D."/>
            <person name="Eisen J.A."/>
            <person name="Carpenter L."/>
            <person name="White O."/>
            <person name="Peterson J.D."/>
            <person name="DeBoy R.T."/>
            <person name="Dodson R.J."/>
            <person name="Gwinn M.L."/>
            <person name="Haft D.H."/>
            <person name="Hickey E.K."/>
            <person name="Kolonay J.F."/>
            <person name="Nelson W.C."/>
            <person name="Umayam L.A."/>
            <person name="Ermolaeva M.D."/>
            <person name="Salzberg S.L."/>
            <person name="Delcher A."/>
            <person name="Utterback T.R."/>
            <person name="Weidman J.F."/>
            <person name="Khouri H.M."/>
            <person name="Gill J."/>
            <person name="Mikula A."/>
            <person name="Bishai W."/>
            <person name="Jacobs W.R. Jr."/>
            <person name="Venter J.C."/>
            <person name="Fraser C.M."/>
        </authorList>
    </citation>
    <scope>NUCLEOTIDE SEQUENCE [LARGE SCALE GENOMIC DNA]</scope>
    <source>
        <strain>CDC 1551 / Oshkosh</strain>
    </source>
</reference>
<evidence type="ECO:0000250" key="1">
    <source>
        <dbReference type="UniProtKB" id="P26394"/>
    </source>
</evidence>
<evidence type="ECO:0000250" key="2">
    <source>
        <dbReference type="UniProtKB" id="P9WH11"/>
    </source>
</evidence>
<evidence type="ECO:0000250" key="3">
    <source>
        <dbReference type="UniProtKB" id="Q5SFD1"/>
    </source>
</evidence>
<evidence type="ECO:0000250" key="4">
    <source>
        <dbReference type="UniProtKB" id="Q9HU21"/>
    </source>
</evidence>
<evidence type="ECO:0000305" key="5"/>
<dbReference type="EC" id="5.1.3.13" evidence="2"/>
<dbReference type="EMBL" id="AE000516">
    <property type="protein sequence ID" value="AAK47911.1"/>
    <property type="molecule type" value="Genomic_DNA"/>
</dbReference>
<dbReference type="PIR" id="F70566">
    <property type="entry name" value="F70566"/>
</dbReference>
<dbReference type="SMR" id="P9WH10"/>
<dbReference type="BindingDB" id="P9WH10"/>
<dbReference type="ChEMBL" id="CHEMBL4105851"/>
<dbReference type="KEGG" id="mtc:MT3571"/>
<dbReference type="PATRIC" id="fig|83331.31.peg.3828"/>
<dbReference type="HOGENOM" id="CLU_090940_0_0_11"/>
<dbReference type="UniPathway" id="UPA00124"/>
<dbReference type="Proteomes" id="UP000001020">
    <property type="component" value="Chromosome"/>
</dbReference>
<dbReference type="GO" id="GO:0005829">
    <property type="term" value="C:cytosol"/>
    <property type="evidence" value="ECO:0007669"/>
    <property type="project" value="TreeGrafter"/>
</dbReference>
<dbReference type="GO" id="GO:0008830">
    <property type="term" value="F:dTDP-4-dehydrorhamnose 3,5-epimerase activity"/>
    <property type="evidence" value="ECO:0007669"/>
    <property type="project" value="UniProtKB-EC"/>
</dbReference>
<dbReference type="GO" id="GO:0019305">
    <property type="term" value="P:dTDP-rhamnose biosynthetic process"/>
    <property type="evidence" value="ECO:0007669"/>
    <property type="project" value="UniProtKB-UniPathway"/>
</dbReference>
<dbReference type="GO" id="GO:0000271">
    <property type="term" value="P:polysaccharide biosynthetic process"/>
    <property type="evidence" value="ECO:0007669"/>
    <property type="project" value="TreeGrafter"/>
</dbReference>
<dbReference type="CDD" id="cd00438">
    <property type="entry name" value="cupin_RmlC"/>
    <property type="match status" value="1"/>
</dbReference>
<dbReference type="FunFam" id="2.60.120.10:FF:000165">
    <property type="entry name" value="dTDP-4-dehydrorhamnose 3,5-epimerase"/>
    <property type="match status" value="1"/>
</dbReference>
<dbReference type="Gene3D" id="2.60.120.10">
    <property type="entry name" value="Jelly Rolls"/>
    <property type="match status" value="1"/>
</dbReference>
<dbReference type="InterPro" id="IPR000888">
    <property type="entry name" value="RmlC-like"/>
</dbReference>
<dbReference type="InterPro" id="IPR014710">
    <property type="entry name" value="RmlC-like_jellyroll"/>
</dbReference>
<dbReference type="InterPro" id="IPR011051">
    <property type="entry name" value="RmlC_Cupin_sf"/>
</dbReference>
<dbReference type="NCBIfam" id="TIGR01221">
    <property type="entry name" value="rmlC"/>
    <property type="match status" value="1"/>
</dbReference>
<dbReference type="PANTHER" id="PTHR21047">
    <property type="entry name" value="DTDP-6-DEOXY-D-GLUCOSE-3,5 EPIMERASE"/>
    <property type="match status" value="1"/>
</dbReference>
<dbReference type="PANTHER" id="PTHR21047:SF2">
    <property type="entry name" value="THYMIDINE DIPHOSPHO-4-KETO-RHAMNOSE 3,5-EPIMERASE"/>
    <property type="match status" value="1"/>
</dbReference>
<dbReference type="Pfam" id="PF00908">
    <property type="entry name" value="dTDP_sugar_isom"/>
    <property type="match status" value="1"/>
</dbReference>
<dbReference type="SUPFAM" id="SSF51182">
    <property type="entry name" value="RmlC-like cupins"/>
    <property type="match status" value="1"/>
</dbReference>
<accession>P9WH10</accession>
<accession>L0TE75</accession>
<accession>O06330</accession>
<accession>Q7D5I3</accession>
<sequence length="202" mass="22314">MKARELDVPGAWEITPTIHVDSRGLFFEWLTDHGFRAFAGHSLDVRQVNCSVSSAGVLRGLHFAQLPPSQAKYVTCVSGSVFDVVVDIREGSPTFGRWDSVLLDDQDRRTIYVSEGLAHGFLALQDNSTVMYLCSAEYNPQREHTICATDPTLAVDWPLVDGAAPSLSDRDAAAPSFEDVRASGLLPRWEQTQRFIGEMRGT</sequence>
<gene>
    <name type="primary">rmlC</name>
    <name type="synonym">strM</name>
    <name type="ordered locus">MT3571</name>
</gene>
<comment type="function">
    <text evidence="2">Catalyzes the epimerization of the C3' and C5'positions of dTDP-6-deoxy-D-xylo-4-hexulose, forming dTDP-6-deoxy-L-lyxo-4-hexulose. Involved in the biosynthesis of the dTDP-L-rhamnose which is a component of the critical linker, D-N-acetylglucosamine-L-rhamnose disaccharide, which connects the galactan region of arabinogalactan to peptidoglycan via a phosphodiester linkage.</text>
</comment>
<comment type="catalytic activity">
    <reaction evidence="2">
        <text>dTDP-4-dehydro-6-deoxy-alpha-D-glucose = dTDP-4-dehydro-beta-L-rhamnose</text>
        <dbReference type="Rhea" id="RHEA:16969"/>
        <dbReference type="ChEBI" id="CHEBI:57649"/>
        <dbReference type="ChEBI" id="CHEBI:62830"/>
        <dbReference type="EC" id="5.1.3.13"/>
    </reaction>
</comment>
<comment type="pathway">
    <text evidence="1">Carbohydrate biosynthesis; dTDP-L-rhamnose biosynthesis.</text>
</comment>
<comment type="subunit">
    <text evidence="2">Homodimer.</text>
</comment>
<comment type="similarity">
    <text evidence="5">Belongs to the dTDP-4-dehydrorhamnose 3,5-epimerase family.</text>
</comment>
<proteinExistence type="inferred from homology"/>